<accession>Q569Z6</accession>
<gene>
    <name type="primary">Thrap3</name>
    <name type="synonym">Trap150</name>
</gene>
<organism>
    <name type="scientific">Mus musculus</name>
    <name type="common">Mouse</name>
    <dbReference type="NCBI Taxonomy" id="10090"/>
    <lineage>
        <taxon>Eukaryota</taxon>
        <taxon>Metazoa</taxon>
        <taxon>Chordata</taxon>
        <taxon>Craniata</taxon>
        <taxon>Vertebrata</taxon>
        <taxon>Euteleostomi</taxon>
        <taxon>Mammalia</taxon>
        <taxon>Eutheria</taxon>
        <taxon>Euarchontoglires</taxon>
        <taxon>Glires</taxon>
        <taxon>Rodentia</taxon>
        <taxon>Myomorpha</taxon>
        <taxon>Muroidea</taxon>
        <taxon>Muridae</taxon>
        <taxon>Murinae</taxon>
        <taxon>Mus</taxon>
        <taxon>Mus</taxon>
    </lineage>
</organism>
<proteinExistence type="evidence at protein level"/>
<keyword id="KW-0007">Acetylation</keyword>
<keyword id="KW-0010">Activator</keyword>
<keyword id="KW-0067">ATP-binding</keyword>
<keyword id="KW-0090">Biological rhythms</keyword>
<keyword id="KW-1017">Isopeptide bond</keyword>
<keyword id="KW-0488">Methylation</keyword>
<keyword id="KW-0507">mRNA processing</keyword>
<keyword id="KW-0508">mRNA splicing</keyword>
<keyword id="KW-0547">Nucleotide-binding</keyword>
<keyword id="KW-0539">Nucleus</keyword>
<keyword id="KW-0597">Phosphoprotein</keyword>
<keyword id="KW-0675">Receptor</keyword>
<keyword id="KW-1185">Reference proteome</keyword>
<keyword id="KW-0804">Transcription</keyword>
<keyword id="KW-0805">Transcription regulation</keyword>
<keyword id="KW-0832">Ubl conjugation</keyword>
<evidence type="ECO:0000250" key="1"/>
<evidence type="ECO:0000250" key="2">
    <source>
        <dbReference type="UniProtKB" id="Q5M7V8"/>
    </source>
</evidence>
<evidence type="ECO:0000250" key="3">
    <source>
        <dbReference type="UniProtKB" id="Q9Y2W1"/>
    </source>
</evidence>
<evidence type="ECO:0000255" key="4"/>
<evidence type="ECO:0000256" key="5">
    <source>
        <dbReference type="SAM" id="MobiDB-lite"/>
    </source>
</evidence>
<evidence type="ECO:0000269" key="6">
    <source>
    </source>
</evidence>
<evidence type="ECO:0000269" key="7">
    <source>
    </source>
</evidence>
<evidence type="ECO:0000305" key="8"/>
<evidence type="ECO:0007744" key="9">
    <source>
    </source>
</evidence>
<evidence type="ECO:0007744" key="10">
    <source>
    </source>
</evidence>
<evidence type="ECO:0007744" key="11">
    <source>
    </source>
</evidence>
<evidence type="ECO:0007744" key="12">
    <source>
    </source>
</evidence>
<evidence type="ECO:0007744" key="13">
    <source>
    </source>
</evidence>
<evidence type="ECO:0007744" key="14">
    <source>
    </source>
</evidence>
<evidence type="ECO:0007744" key="15">
    <source>
    </source>
</evidence>
<evidence type="ECO:0007744" key="16">
    <source>
    </source>
</evidence>
<comment type="function">
    <text evidence="6 7">Involved in pre-mRNA splicing. Remains associated with spliced mRNA after splicing which probably involves interactions with the exon junction complex (EJC). Can trigger mRNA decay which seems to be independent of nonsense-mediated decay involving premature stop codons (PTC) recognition. May be involved in nuclear mRNA decay. Involved in regulation of signal-induced alternative splicing. During splicing of PTPRC/CD45 is proposed to sequester phosphorylated SFPQ from PTPRC/CD45 pre-mRNA in resting T-cells. Involved in cyclin-D1/CCND1 mRNA stability probably by acting as component of the SNARP complex which associates with both the 3'end of the CCND1 gene and its mRNA. Involved in response to DNA damage. Is excluced from DNA damage sites in a manner that parallels transcription inhibition; the function may involve the SNARP complex. Initially thought to play a role in transcriptional coactivation through its association with the TRAP complex; however, it is not regarded as a stable Mediator complex subunit. Cooperatively with HELZ2, enhances the transcriptional activation mediated by PPARG, maybe through the stabilization of the PPARG binding to DNA in presence of ligand. May play a role in the terminal stage of adipocyte differentiation. Plays a role in the positive regulation of the circadian clock. Acts as a coactivator of the CLOCK-BMAL1 heterodimer and promotes its transcriptional activator activity and binding to circadian target genes (PubMed:24043798).</text>
</comment>
<comment type="subunit">
    <text evidence="3">Associated with the large multiprotein complex TRAP (Mediator complex-like). Interacts with SFPQ; the interaction is dependent on SFPQ phosphorylation at 'Thr-687' and inhibits binding of SFPQ to an ESS1 exonic splicing silencer element-containing RNA. Interacts with NXF1. Component of the SNARP complex which consists at least of SNIP1, SNW1, THRAP3, BCLAF1 and PNN. Associated with spliced mRNP complexes. Interacts with HELZ2 and PPARG. Interacts with CLOCK and BMAL1 (By similarity). Component of a MACOM-like complex, named WTAP complex, composed of WTAP, ZC3H13, CBLL1, KIAA1429, RBM15, BCLAF1 and THRAP3 (By similarity).</text>
</comment>
<comment type="subcellular location">
    <subcellularLocation>
        <location evidence="6">Nucleus</location>
    </subcellularLocation>
    <subcellularLocation>
        <location evidence="3">Nucleus</location>
        <location evidence="3">Nucleoplasm</location>
    </subcellularLocation>
    <subcellularLocation>
        <location evidence="3">Nucleus speckle</location>
    </subcellularLocation>
</comment>
<comment type="induction">
    <text evidence="7">Expressed in a circadian manner in the liver with a peak at approximately circadian time (CT) 8 hours (at protein level).</text>
</comment>
<comment type="similarity">
    <text evidence="8">Belongs to the BCLAF1/THRAP3 family.</text>
</comment>
<reference key="1">
    <citation type="journal article" date="2004" name="Genome Res.">
        <title>The status, quality, and expansion of the NIH full-length cDNA project: the Mammalian Gene Collection (MGC).</title>
        <authorList>
            <consortium name="The MGC Project Team"/>
        </authorList>
    </citation>
    <scope>NUCLEOTIDE SEQUENCE [LARGE SCALE MRNA]</scope>
    <source>
        <strain>C57BL/6J</strain>
        <tissue>Head</tissue>
    </source>
</reference>
<reference key="2">
    <citation type="journal article" date="2006" name="Mol. Cell. Proteomics">
        <title>Comprehensive identification of phosphorylation sites in postsynaptic density preparations.</title>
        <authorList>
            <person name="Trinidad J.C."/>
            <person name="Specht C.G."/>
            <person name="Thalhammer A."/>
            <person name="Schoepfer R."/>
            <person name="Burlingame A.L."/>
        </authorList>
    </citation>
    <scope>PHOSPHORYLATION [LARGE SCALE ANALYSIS] AT SER-572</scope>
    <scope>IDENTIFICATION BY MASS SPECTROMETRY [LARGE SCALE ANALYSIS]</scope>
    <source>
        <tissue>Brain</tissue>
    </source>
</reference>
<reference key="3">
    <citation type="journal article" date="2007" name="Proc. Natl. Acad. Sci. U.S.A.">
        <title>Large-scale phosphorylation analysis of mouse liver.</title>
        <authorList>
            <person name="Villen J."/>
            <person name="Beausoleil S.A."/>
            <person name="Gerber S.A."/>
            <person name="Gygi S.P."/>
        </authorList>
    </citation>
    <scope>PHOSPHORYLATION [LARGE SCALE ANALYSIS] AT SER-243; SER-315; SER-320; SER-379; SER-924 AND SER-935</scope>
    <scope>IDENTIFICATION BY MASS SPECTROMETRY [LARGE SCALE ANALYSIS]</scope>
    <source>
        <tissue>Liver</tissue>
    </source>
</reference>
<reference key="4">
    <citation type="journal article" date="2008" name="J. Proteome Res.">
        <title>Specific phosphopeptide enrichment with immobilized titanium ion affinity chromatography adsorbent for phosphoproteome analysis.</title>
        <authorList>
            <person name="Zhou H."/>
            <person name="Ye M."/>
            <person name="Dong J."/>
            <person name="Han G."/>
            <person name="Jiang X."/>
            <person name="Wu R."/>
            <person name="Zou H."/>
        </authorList>
    </citation>
    <scope>PHOSPHORYLATION [LARGE SCALE ANALYSIS] AT SER-243 AND SER-679</scope>
    <scope>IDENTIFICATION BY MASS SPECTROMETRY [LARGE SCALE ANALYSIS]</scope>
    <source>
        <tissue>Liver</tissue>
    </source>
</reference>
<reference key="5">
    <citation type="journal article" date="2009" name="Immunity">
        <title>The phagosomal proteome in interferon-gamma-activated macrophages.</title>
        <authorList>
            <person name="Trost M."/>
            <person name="English L."/>
            <person name="Lemieux S."/>
            <person name="Courcelles M."/>
            <person name="Desjardins M."/>
            <person name="Thibault P."/>
        </authorList>
    </citation>
    <scope>PHOSPHORYLATION [LARGE SCALE ANALYSIS] AT SER-379; SER-572; SER-679; SER-924 AND SER-935</scope>
    <scope>IDENTIFICATION BY MASS SPECTROMETRY [LARGE SCALE ANALYSIS]</scope>
</reference>
<reference key="6">
    <citation type="journal article" date="2009" name="Mol. Cell. Proteomics">
        <title>Large scale localization of protein phosphorylation by use of electron capture dissociation mass spectrometry.</title>
        <authorList>
            <person name="Sweet S.M."/>
            <person name="Bailey C.M."/>
            <person name="Cunningham D.L."/>
            <person name="Heath J.K."/>
            <person name="Cooper H.J."/>
        </authorList>
    </citation>
    <scope>PHOSPHORYLATION [LARGE SCALE ANALYSIS] AT SER-243; SER-248; SER-253; SER-572 AND SER-679</scope>
    <scope>IDENTIFICATION BY MASS SPECTROMETRY [LARGE SCALE ANALYSIS]</scope>
    <source>
        <tissue>Embryonic fibroblast</tissue>
    </source>
</reference>
<reference key="7">
    <citation type="journal article" date="2010" name="Cell">
        <title>A tissue-specific atlas of mouse protein phosphorylation and expression.</title>
        <authorList>
            <person name="Huttlin E.L."/>
            <person name="Jedrychowski M.P."/>
            <person name="Elias J.E."/>
            <person name="Goswami T."/>
            <person name="Rad R."/>
            <person name="Beausoleil S.A."/>
            <person name="Villen J."/>
            <person name="Haas W."/>
            <person name="Sowa M.E."/>
            <person name="Gygi S.P."/>
        </authorList>
    </citation>
    <scope>PHOSPHORYLATION [LARGE SCALE ANALYSIS] AT SER-233; SER-238; SER-243; SER-248; SER-253; SER-315; SER-320; THR-324; TYR-328; SER-379; SER-572; SER-679; THR-870; SER-924 AND SER-935</scope>
    <scope>IDENTIFICATION BY MASS SPECTROMETRY [LARGE SCALE ANALYSIS]</scope>
    <source>
        <tissue>Brain</tissue>
        <tissue>Brown adipose tissue</tissue>
        <tissue>Heart</tissue>
        <tissue>Kidney</tissue>
        <tissue>Liver</tissue>
        <tissue>Lung</tissue>
        <tissue>Pancreas</tissue>
        <tissue>Spleen</tissue>
        <tissue>Testis</tissue>
    </source>
</reference>
<reference key="8">
    <citation type="journal article" date="2013" name="Mol. Cell">
        <title>SIRT5-mediated lysine desuccinylation impacts diverse metabolic pathways.</title>
        <authorList>
            <person name="Park J."/>
            <person name="Chen Y."/>
            <person name="Tishkoff D.X."/>
            <person name="Peng C."/>
            <person name="Tan M."/>
            <person name="Dai L."/>
            <person name="Xie Z."/>
            <person name="Zhang Y."/>
            <person name="Zwaans B.M."/>
            <person name="Skinner M.E."/>
            <person name="Lombard D.B."/>
            <person name="Zhao Y."/>
        </authorList>
    </citation>
    <scope>ACETYLATION [LARGE SCALE ANALYSIS] AT LYS-346; LYS-452; LYS-468; LYS-476; LYS-524 AND LYS-555</scope>
    <scope>IDENTIFICATION BY MASS SPECTROMETRY [LARGE SCALE ANALYSIS]</scope>
    <source>
        <tissue>Embryonic fibroblast</tissue>
    </source>
</reference>
<reference key="9">
    <citation type="journal article" date="2013" name="Mol. Endocrinol.">
        <title>THRAP3 interacts with HELZ2 and plays a novel role in adipocyte differentiation.</title>
        <authorList>
            <person name="Katano-Toki A."/>
            <person name="Satoh T."/>
            <person name="Tomaru T."/>
            <person name="Yoshino S."/>
            <person name="Ishizuka T."/>
            <person name="Ishii S."/>
            <person name="Ozawa A."/>
            <person name="Shibusawa N."/>
            <person name="Tsuchiya T."/>
            <person name="Saito T."/>
            <person name="Shimizu H."/>
            <person name="Hashimoto K."/>
            <person name="Okada S."/>
            <person name="Yamada M."/>
            <person name="Mori M."/>
        </authorList>
    </citation>
    <scope>FUNCTION</scope>
    <scope>INTERACTION WITH HELZ2 AND PPARG</scope>
    <scope>SUBCELLULAR LOCATION</scope>
</reference>
<reference key="10">
    <citation type="journal article" date="2013" name="Proc. Natl. Acad. Sci. U.S.A.">
        <title>A positive feedback loop links circadian clock factor CLOCK-BMAL1 to the basic transcriptional machinery.</title>
        <authorList>
            <person name="Lande-Diner L."/>
            <person name="Boyault C."/>
            <person name="Kim J.Y."/>
            <person name="Weitz C.J."/>
        </authorList>
    </citation>
    <scope>FUNCTION</scope>
    <scope>INTERACTION WITH CLOCK AND BMAL1</scope>
    <scope>INDUCTION</scope>
</reference>
<reference key="11">
    <citation type="journal article" date="2014" name="Mol. Cell. Proteomics">
        <title>Immunoaffinity enrichment and mass spectrometry analysis of protein methylation.</title>
        <authorList>
            <person name="Guo A."/>
            <person name="Gu H."/>
            <person name="Zhou J."/>
            <person name="Mulhern D."/>
            <person name="Wang Y."/>
            <person name="Lee K.A."/>
            <person name="Yang V."/>
            <person name="Aguiar M."/>
            <person name="Kornhauser J."/>
            <person name="Jia X."/>
            <person name="Ren J."/>
            <person name="Beausoleil S.A."/>
            <person name="Silva J.C."/>
            <person name="Vemulapalli V."/>
            <person name="Bedford M.T."/>
            <person name="Comb M.J."/>
        </authorList>
    </citation>
    <scope>METHYLATION [LARGE SCALE ANALYSIS] AT ARG-101; ARG-108 AND ARG-841</scope>
    <scope>IDENTIFICATION BY MASS SPECTROMETRY [LARGE SCALE ANALYSIS]</scope>
    <source>
        <tissue>Brain</tissue>
        <tissue>Embryo</tissue>
    </source>
</reference>
<protein>
    <recommendedName>
        <fullName>Thyroid hormone receptor-associated protein 3</fullName>
    </recommendedName>
    <alternativeName>
        <fullName>Thyroid hormone receptor-associated protein complex 150 kDa component</fullName>
        <shortName>Trap150</shortName>
    </alternativeName>
</protein>
<sequence>MSKTNKSKSGSRSSRSRSASRSRSRSFSKSRSRSRSVSRSRKRRLSSRSRSRSYSPAHNRERNHPRVYQNRDFRGHNRGYRRPYYFRGRNRGFYPWGQYNRGGYGNYRSNWQNYRQAYSPRRGRSRSRSPKRRSPSPRSRSHSRNSDKSSSDRSRRSSSSRSSSNHSRVESSKRKSTKEKKSSSKDSRPSQAAGDNQGDEAKEQTFSGGTSQDIKGSESSKPWPDATTYGAGSASRASVSDLSPRERSPALKSPLQSVVVRRRSPRPSPVPKPSPPLSNASQMGSSMSGGAGYQSGAHQGQFDHGSGSLSPSKKSPVGKSPPATGSAYGSSQKEESAASGGAAYSKRYLEEQKTENGKDKEQKQTNADKEKLKEKGGFSDADVKMKSDPFAPKTDSEKPFRGSQSPKRYKLRDDFEKKMADFHKEELDEHDKDKSKGRKEPEFDDEPKFMSKVIAGASKNQEEEKSGKWESLHTGKEKQRKAEEMEDEPFTERSRKEERGGSKRSESGHRGFVPEKNFRVTAYKAVQEKSSSPPPRKTSESRDKLGSKGDFSSGKSSFSITREAQVNVRMDSFDEDLARPSGLLAQERKLCRDLVHSNKKEQEFRSIFQHIQSAQSQRSPSELFAQHIVTIVHHVKEHHFGSSGMTLHERFTKYLKRGNEQEAAKNKKSPEIHRRIDISPSTFRKHGLTHEELKSPREPGYKAEGKYKDDPVDLRLDIERRKKHKERDLKRGKSRESVDSRDSSHSRERSTEKTEKTHKGSKKQKKHRRARDRSRSSSSSSQSSHSYKAEEYPEEAEEREESTSGFDKSRLGTKDFVGPNERGGRARGTFQFRARGRGWGRGNYSGNNNNNSNNDFQKRSREEEWDPEYTPKSKKYYLHDDREGEGSDKWMGRGRGRGAFPRGRGRFMFRKSSTSPKWAHDKFSGEEGEIEDDESGTENREEKDSLQPSAE</sequence>
<dbReference type="EMBL" id="BC092239">
    <property type="protein sequence ID" value="AAH92239.1"/>
    <property type="molecule type" value="mRNA"/>
</dbReference>
<dbReference type="CCDS" id="CCDS18645.1"/>
<dbReference type="RefSeq" id="NP_001343384.1">
    <property type="nucleotide sequence ID" value="NM_001356455.1"/>
</dbReference>
<dbReference type="RefSeq" id="NP_001343385.1">
    <property type="nucleotide sequence ID" value="NM_001356456.1"/>
</dbReference>
<dbReference type="RefSeq" id="NP_666265.3">
    <property type="nucleotide sequence ID" value="NM_146153.3"/>
</dbReference>
<dbReference type="RefSeq" id="XP_006503104.1">
    <property type="nucleotide sequence ID" value="XM_006503041.3"/>
</dbReference>
<dbReference type="RefSeq" id="XP_011238805.1">
    <property type="nucleotide sequence ID" value="XM_011240503.2"/>
</dbReference>
<dbReference type="RefSeq" id="XP_036019940.1">
    <property type="nucleotide sequence ID" value="XM_036164047.1"/>
</dbReference>
<dbReference type="BioGRID" id="231014">
    <property type="interactions" value="19"/>
</dbReference>
<dbReference type="CORUM" id="Q569Z6"/>
<dbReference type="FunCoup" id="Q569Z6">
    <property type="interactions" value="5325"/>
</dbReference>
<dbReference type="IntAct" id="Q569Z6">
    <property type="interactions" value="16"/>
</dbReference>
<dbReference type="MINT" id="Q569Z6"/>
<dbReference type="STRING" id="10090.ENSMUSP00000079722"/>
<dbReference type="GlyGen" id="Q569Z6">
    <property type="glycosylation" value="2 sites, 1 N-linked glycan (1 site), 1 O-linked glycan (1 site)"/>
</dbReference>
<dbReference type="iPTMnet" id="Q569Z6"/>
<dbReference type="PhosphoSitePlus" id="Q569Z6"/>
<dbReference type="SwissPalm" id="Q569Z6"/>
<dbReference type="jPOST" id="Q569Z6"/>
<dbReference type="PaxDb" id="10090-ENSMUSP00000079722"/>
<dbReference type="PeptideAtlas" id="Q569Z6"/>
<dbReference type="ProteomicsDB" id="258836"/>
<dbReference type="Pumba" id="Q569Z6"/>
<dbReference type="DNASU" id="230753"/>
<dbReference type="Ensembl" id="ENSMUST00000080919.12">
    <property type="protein sequence ID" value="ENSMUSP00000079722.6"/>
    <property type="gene ID" value="ENSMUSG00000043962.17"/>
</dbReference>
<dbReference type="GeneID" id="230753"/>
<dbReference type="KEGG" id="mmu:230753"/>
<dbReference type="UCSC" id="uc008usv.1">
    <property type="organism name" value="mouse"/>
</dbReference>
<dbReference type="AGR" id="MGI:2442637"/>
<dbReference type="CTD" id="9967"/>
<dbReference type="MGI" id="MGI:2442637">
    <property type="gene designation" value="Thrap3"/>
</dbReference>
<dbReference type="VEuPathDB" id="HostDB:ENSMUSG00000043962"/>
<dbReference type="eggNOG" id="ENOG502QR38">
    <property type="taxonomic scope" value="Eukaryota"/>
</dbReference>
<dbReference type="GeneTree" id="ENSGT00950000183163"/>
<dbReference type="HOGENOM" id="CLU_014485_1_0_1"/>
<dbReference type="InParanoid" id="Q569Z6"/>
<dbReference type="OMA" id="GEGTDKW"/>
<dbReference type="OrthoDB" id="9948513at2759"/>
<dbReference type="PhylomeDB" id="Q569Z6"/>
<dbReference type="TreeFam" id="TF335939"/>
<dbReference type="BioGRID-ORCS" id="230753">
    <property type="hits" value="7 hits in 79 CRISPR screens"/>
</dbReference>
<dbReference type="ChiTaRS" id="Thrap3">
    <property type="organism name" value="mouse"/>
</dbReference>
<dbReference type="PRO" id="PR:Q569Z6"/>
<dbReference type="Proteomes" id="UP000000589">
    <property type="component" value="Chromosome 4"/>
</dbReference>
<dbReference type="RNAct" id="Q569Z6">
    <property type="molecule type" value="protein"/>
</dbReference>
<dbReference type="Bgee" id="ENSMUSG00000043962">
    <property type="expression patterns" value="Expressed in embryonic post-anal tail and 259 other cell types or tissues"/>
</dbReference>
<dbReference type="ExpressionAtlas" id="Q569Z6">
    <property type="expression patterns" value="baseline and differential"/>
</dbReference>
<dbReference type="GO" id="GO:0035145">
    <property type="term" value="C:exon-exon junction complex"/>
    <property type="evidence" value="ECO:0007669"/>
    <property type="project" value="Ensembl"/>
</dbReference>
<dbReference type="GO" id="GO:0016592">
    <property type="term" value="C:mediator complex"/>
    <property type="evidence" value="ECO:0000314"/>
    <property type="project" value="MGI"/>
</dbReference>
<dbReference type="GO" id="GO:0016607">
    <property type="term" value="C:nuclear speck"/>
    <property type="evidence" value="ECO:0000250"/>
    <property type="project" value="UniProtKB"/>
</dbReference>
<dbReference type="GO" id="GO:0005654">
    <property type="term" value="C:nucleoplasm"/>
    <property type="evidence" value="ECO:0000304"/>
    <property type="project" value="Reactome"/>
</dbReference>
<dbReference type="GO" id="GO:0005634">
    <property type="term" value="C:nucleus"/>
    <property type="evidence" value="ECO:0000250"/>
    <property type="project" value="UniProtKB"/>
</dbReference>
<dbReference type="GO" id="GO:0005524">
    <property type="term" value="F:ATP binding"/>
    <property type="evidence" value="ECO:0007669"/>
    <property type="project" value="UniProtKB-KW"/>
</dbReference>
<dbReference type="GO" id="GO:0046966">
    <property type="term" value="F:nuclear thyroid hormone receptor binding"/>
    <property type="evidence" value="ECO:0007669"/>
    <property type="project" value="Ensembl"/>
</dbReference>
<dbReference type="GO" id="GO:0051219">
    <property type="term" value="F:phosphoprotein binding"/>
    <property type="evidence" value="ECO:0000250"/>
    <property type="project" value="UniProtKB"/>
</dbReference>
<dbReference type="GO" id="GO:0000978">
    <property type="term" value="F:RNA polymerase II cis-regulatory region sequence-specific DNA binding"/>
    <property type="evidence" value="ECO:0000314"/>
    <property type="project" value="UniProtKB"/>
</dbReference>
<dbReference type="GO" id="GO:0003713">
    <property type="term" value="F:transcription coactivator activity"/>
    <property type="evidence" value="ECO:0000315"/>
    <property type="project" value="UniProtKB"/>
</dbReference>
<dbReference type="GO" id="GO:0007623">
    <property type="term" value="P:circadian rhythm"/>
    <property type="evidence" value="ECO:0000270"/>
    <property type="project" value="UniProtKB"/>
</dbReference>
<dbReference type="GO" id="GO:0006397">
    <property type="term" value="P:mRNA processing"/>
    <property type="evidence" value="ECO:0007669"/>
    <property type="project" value="UniProtKB-KW"/>
</dbReference>
<dbReference type="GO" id="GO:0048255">
    <property type="term" value="P:mRNA stabilization"/>
    <property type="evidence" value="ECO:0000250"/>
    <property type="project" value="UniProtKB"/>
</dbReference>
<dbReference type="GO" id="GO:0000956">
    <property type="term" value="P:nuclear-transcribed mRNA catabolic process"/>
    <property type="evidence" value="ECO:0000250"/>
    <property type="project" value="UniProtKB"/>
</dbReference>
<dbReference type="GO" id="GO:0042753">
    <property type="term" value="P:positive regulation of circadian rhythm"/>
    <property type="evidence" value="ECO:0000250"/>
    <property type="project" value="UniProtKB"/>
</dbReference>
<dbReference type="GO" id="GO:0048026">
    <property type="term" value="P:positive regulation of mRNA splicing, via spliceosome"/>
    <property type="evidence" value="ECO:0000250"/>
    <property type="project" value="UniProtKB"/>
</dbReference>
<dbReference type="GO" id="GO:0045944">
    <property type="term" value="P:positive regulation of transcription by RNA polymerase II"/>
    <property type="evidence" value="ECO:0000266"/>
    <property type="project" value="MGI"/>
</dbReference>
<dbReference type="GO" id="GO:0000381">
    <property type="term" value="P:regulation of alternative mRNA splicing, via spliceosome"/>
    <property type="evidence" value="ECO:0000250"/>
    <property type="project" value="UniProtKB"/>
</dbReference>
<dbReference type="GO" id="GO:0008380">
    <property type="term" value="P:RNA splicing"/>
    <property type="evidence" value="ECO:0007669"/>
    <property type="project" value="UniProtKB-KW"/>
</dbReference>
<dbReference type="GO" id="GO:0006366">
    <property type="term" value="P:transcription by RNA polymerase II"/>
    <property type="evidence" value="ECO:0000305"/>
    <property type="project" value="MGI"/>
</dbReference>
<dbReference type="InterPro" id="IPR029199">
    <property type="entry name" value="THRAP3_BCLAF1"/>
</dbReference>
<dbReference type="PANTHER" id="PTHR15268">
    <property type="entry name" value="THRAP3/BCLAF1"/>
    <property type="match status" value="1"/>
</dbReference>
<dbReference type="PANTHER" id="PTHR15268:SF16">
    <property type="entry name" value="THYROID HORMONE RECEPTOR-ASSOCIATED PROTEIN 3"/>
    <property type="match status" value="1"/>
</dbReference>
<dbReference type="Pfam" id="PF15440">
    <property type="entry name" value="THRAP3_BCLAF1"/>
    <property type="match status" value="1"/>
</dbReference>
<feature type="initiator methionine" description="Removed" evidence="3">
    <location>
        <position position="1"/>
    </location>
</feature>
<feature type="chain" id="PRO_0000235980" description="Thyroid hormone receptor-associated protein 3">
    <location>
        <begin position="2"/>
        <end position="951"/>
    </location>
</feature>
<feature type="region of interest" description="Disordered" evidence="5">
    <location>
        <begin position="1"/>
        <end position="94"/>
    </location>
</feature>
<feature type="region of interest" description="Required for mRNA splicing activation" evidence="1">
    <location>
        <begin position="2"/>
        <end position="190"/>
    </location>
</feature>
<feature type="region of interest" description="Disordered" evidence="5">
    <location>
        <begin position="117"/>
        <end position="558"/>
    </location>
</feature>
<feature type="region of interest" description="Required for mRNA decay activity" evidence="1">
    <location>
        <begin position="359"/>
        <end position="951"/>
    </location>
</feature>
<feature type="region of interest" description="Disordered" evidence="5">
    <location>
        <begin position="660"/>
        <end position="951"/>
    </location>
</feature>
<feature type="compositionally biased region" description="Low complexity" evidence="5">
    <location>
        <begin position="1"/>
        <end position="13"/>
    </location>
</feature>
<feature type="compositionally biased region" description="Basic residues" evidence="5">
    <location>
        <begin position="14"/>
        <end position="51"/>
    </location>
</feature>
<feature type="compositionally biased region" description="Basic and acidic residues" evidence="5">
    <location>
        <begin position="58"/>
        <end position="75"/>
    </location>
</feature>
<feature type="compositionally biased region" description="Low complexity" evidence="5">
    <location>
        <begin position="82"/>
        <end position="94"/>
    </location>
</feature>
<feature type="compositionally biased region" description="Basic residues" evidence="5">
    <location>
        <begin position="121"/>
        <end position="143"/>
    </location>
</feature>
<feature type="compositionally biased region" description="Basic and acidic residues" evidence="5">
    <location>
        <begin position="144"/>
        <end position="155"/>
    </location>
</feature>
<feature type="compositionally biased region" description="Low complexity" evidence="5">
    <location>
        <begin position="157"/>
        <end position="166"/>
    </location>
</feature>
<feature type="compositionally biased region" description="Basic and acidic residues" evidence="5">
    <location>
        <begin position="167"/>
        <end position="188"/>
    </location>
</feature>
<feature type="compositionally biased region" description="Polar residues" evidence="5">
    <location>
        <begin position="204"/>
        <end position="220"/>
    </location>
</feature>
<feature type="compositionally biased region" description="Pro residues" evidence="5">
    <location>
        <begin position="266"/>
        <end position="276"/>
    </location>
</feature>
<feature type="compositionally biased region" description="Low complexity" evidence="5">
    <location>
        <begin position="305"/>
        <end position="322"/>
    </location>
</feature>
<feature type="compositionally biased region" description="Low complexity" evidence="5">
    <location>
        <begin position="337"/>
        <end position="346"/>
    </location>
</feature>
<feature type="compositionally biased region" description="Basic and acidic residues" evidence="5">
    <location>
        <begin position="347"/>
        <end position="387"/>
    </location>
</feature>
<feature type="compositionally biased region" description="Basic and acidic residues" evidence="5">
    <location>
        <begin position="411"/>
        <end position="449"/>
    </location>
</feature>
<feature type="compositionally biased region" description="Basic and acidic residues" evidence="5">
    <location>
        <begin position="460"/>
        <end position="483"/>
    </location>
</feature>
<feature type="compositionally biased region" description="Basic and acidic residues" evidence="5">
    <location>
        <begin position="490"/>
        <end position="518"/>
    </location>
</feature>
<feature type="compositionally biased region" description="Basic and acidic residues" evidence="5">
    <location>
        <begin position="537"/>
        <end position="547"/>
    </location>
</feature>
<feature type="compositionally biased region" description="Low complexity" evidence="5">
    <location>
        <begin position="548"/>
        <end position="558"/>
    </location>
</feature>
<feature type="compositionally biased region" description="Basic and acidic residues" evidence="5">
    <location>
        <begin position="660"/>
        <end position="677"/>
    </location>
</feature>
<feature type="compositionally biased region" description="Basic and acidic residues" evidence="5">
    <location>
        <begin position="688"/>
        <end position="758"/>
    </location>
</feature>
<feature type="compositionally biased region" description="Basic residues" evidence="5">
    <location>
        <begin position="759"/>
        <end position="772"/>
    </location>
</feature>
<feature type="compositionally biased region" description="Low complexity" evidence="5">
    <location>
        <begin position="776"/>
        <end position="786"/>
    </location>
</feature>
<feature type="compositionally biased region" description="Low complexity" evidence="5">
    <location>
        <begin position="844"/>
        <end position="854"/>
    </location>
</feature>
<feature type="compositionally biased region" description="Basic and acidic residues" evidence="5">
    <location>
        <begin position="877"/>
        <end position="891"/>
    </location>
</feature>
<feature type="compositionally biased region" description="Acidic residues" evidence="5">
    <location>
        <begin position="926"/>
        <end position="936"/>
    </location>
</feature>
<feature type="binding site" evidence="4">
    <location>
        <begin position="549"/>
        <end position="556"/>
    </location>
    <ligand>
        <name>ATP</name>
        <dbReference type="ChEBI" id="CHEBI:30616"/>
    </ligand>
</feature>
<feature type="modified residue" description="N-acetylserine" evidence="3">
    <location>
        <position position="2"/>
    </location>
</feature>
<feature type="modified residue" description="Dimethylated arginine" evidence="3">
    <location>
        <position position="17"/>
    </location>
</feature>
<feature type="modified residue" description="Asymmetric dimethylarginine" evidence="3">
    <location>
        <position position="66"/>
    </location>
</feature>
<feature type="modified residue" description="Asymmetric dimethylarginine" evidence="16">
    <location>
        <position position="101"/>
    </location>
</feature>
<feature type="modified residue" description="Asymmetric dimethylarginine" evidence="16">
    <location>
        <position position="108"/>
    </location>
</feature>
<feature type="modified residue" description="Phosphoserine" evidence="3">
    <location>
        <position position="220"/>
    </location>
</feature>
<feature type="modified residue" description="N6-acetyllysine; alternate" evidence="3">
    <location>
        <position position="221"/>
    </location>
</feature>
<feature type="modified residue" description="Phosphoserine" evidence="14">
    <location>
        <position position="233"/>
    </location>
</feature>
<feature type="modified residue" description="Phosphoserine" evidence="14">
    <location>
        <position position="238"/>
    </location>
</feature>
<feature type="modified residue" description="Phosphoserine" evidence="3">
    <location>
        <position position="240"/>
    </location>
</feature>
<feature type="modified residue" description="Phosphoserine" evidence="10 11 12 14">
    <location>
        <position position="243"/>
    </location>
</feature>
<feature type="modified residue" description="Phosphoserine" evidence="12 14">
    <location>
        <position position="248"/>
    </location>
</feature>
<feature type="modified residue" description="N6-methyllysine; alternate" evidence="3">
    <location>
        <position position="252"/>
    </location>
</feature>
<feature type="modified residue" description="Phosphoserine" evidence="12 14">
    <location>
        <position position="253"/>
    </location>
</feature>
<feature type="modified residue" description="Phosphoserine" evidence="3">
    <location>
        <position position="257"/>
    </location>
</feature>
<feature type="modified residue" description="Phosphoserine" evidence="10 14">
    <location>
        <position position="315"/>
    </location>
</feature>
<feature type="modified residue" description="Phosphoserine" evidence="10 14">
    <location>
        <position position="320"/>
    </location>
</feature>
<feature type="modified residue" description="Phosphothreonine" evidence="14">
    <location>
        <position position="324"/>
    </location>
</feature>
<feature type="modified residue" description="Phosphoserine" evidence="3">
    <location>
        <position position="326"/>
    </location>
</feature>
<feature type="modified residue" description="Phosphotyrosine" evidence="14">
    <location>
        <position position="328"/>
    </location>
</feature>
<feature type="modified residue" description="Phosphoserine" evidence="3">
    <location>
        <position position="339"/>
    </location>
</feature>
<feature type="modified residue" description="N6-acetyllysine; alternate" evidence="15">
    <location>
        <position position="346"/>
    </location>
</feature>
<feature type="modified residue" description="Phosphoserine" evidence="10 13 14">
    <location>
        <position position="379"/>
    </location>
</feature>
<feature type="modified residue" description="Phosphothreonine" evidence="3">
    <location>
        <position position="394"/>
    </location>
</feature>
<feature type="modified residue" description="Phosphoserine" evidence="3">
    <location>
        <position position="403"/>
    </location>
</feature>
<feature type="modified residue" description="Phosphoserine" evidence="3">
    <location>
        <position position="405"/>
    </location>
</feature>
<feature type="modified residue" description="N6-acetyllysine; alternate" evidence="15">
    <location>
        <position position="452"/>
    </location>
</feature>
<feature type="modified residue" description="Phosphoserine" evidence="3">
    <location>
        <position position="466"/>
    </location>
</feature>
<feature type="modified residue" description="N6-acetyllysine; alternate" evidence="15">
    <location>
        <position position="468"/>
    </location>
</feature>
<feature type="modified residue" description="N6-acetyllysine; alternate" evidence="15">
    <location>
        <position position="476"/>
    </location>
</feature>
<feature type="modified residue" description="N6-acetyllysine" evidence="3">
    <location>
        <position position="516"/>
    </location>
</feature>
<feature type="modified residue" description="N6-acetyllysine; alternate" evidence="15">
    <location>
        <position position="524"/>
    </location>
</feature>
<feature type="modified residue" description="Phosphoserine" evidence="3">
    <location>
        <position position="532"/>
    </location>
</feature>
<feature type="modified residue" description="N6-acetyllysine; alternate" evidence="15">
    <location>
        <position position="555"/>
    </location>
</feature>
<feature type="modified residue" description="Phosphoserine" evidence="3">
    <location>
        <position position="557"/>
    </location>
</feature>
<feature type="modified residue" description="Phosphoserine" evidence="3">
    <location>
        <position position="559"/>
    </location>
</feature>
<feature type="modified residue" description="Phosphoserine" evidence="9 12 13 14">
    <location>
        <position position="572"/>
    </location>
</feature>
<feature type="modified residue" description="Phosphoserine" evidence="3">
    <location>
        <position position="616"/>
    </location>
</feature>
<feature type="modified residue" description="Phosphoserine" evidence="3">
    <location>
        <position position="619"/>
    </location>
</feature>
<feature type="modified residue" description="Phosphoserine" evidence="3">
    <location>
        <position position="669"/>
    </location>
</feature>
<feature type="modified residue" description="Phosphoserine" evidence="11 12 13 14">
    <location>
        <position position="679"/>
    </location>
</feature>
<feature type="modified residue" description="Phosphoserine" evidence="3">
    <location>
        <position position="681"/>
    </location>
</feature>
<feature type="modified residue" description="Phosphoserine" evidence="3">
    <location>
        <position position="695"/>
    </location>
</feature>
<feature type="modified residue" description="N6-acetyllysine" evidence="3">
    <location>
        <position position="808"/>
    </location>
</feature>
<feature type="modified residue" description="Asymmetric dimethylarginine" evidence="16">
    <location>
        <position position="841"/>
    </location>
</feature>
<feature type="modified residue" description="Phosphoserine" evidence="2">
    <location>
        <position position="860"/>
    </location>
</feature>
<feature type="modified residue" description="Phosphothreonine" evidence="14">
    <location>
        <position position="870"/>
    </location>
</feature>
<feature type="modified residue" description="Phosphoserine" evidence="10 13 14">
    <location>
        <position position="924"/>
    </location>
</feature>
<feature type="modified residue" description="Phosphoserine" evidence="10 13 14">
    <location>
        <position position="935"/>
    </location>
</feature>
<feature type="cross-link" description="Glycyl lysine isopeptide (Lys-Gly) (interchain with G-Cter in SUMO1); alternate" evidence="3">
    <location>
        <position position="202"/>
    </location>
</feature>
<feature type="cross-link" description="Glycyl lysine isopeptide (Lys-Gly) (interchain with G-Cter in SUMO2); alternate" evidence="3">
    <location>
        <position position="202"/>
    </location>
</feature>
<feature type="cross-link" description="Glycyl lysine isopeptide (Lys-Gly) (interchain with G-Cter in SUMO2)" evidence="3">
    <location>
        <position position="215"/>
    </location>
</feature>
<feature type="cross-link" description="Glycyl lysine isopeptide (Lys-Gly) (interchain with G-Cter in SUMO2); alternate" evidence="3">
    <location>
        <position position="221"/>
    </location>
</feature>
<feature type="cross-link" description="Glycyl lysine isopeptide (Lys-Gly) (interchain with G-Cter in SUMO2); alternate" evidence="3">
    <location>
        <position position="252"/>
    </location>
</feature>
<feature type="cross-link" description="Glycyl lysine isopeptide (Lys-Gly) (interchain with G-Cter in SUMO2)" evidence="3">
    <location>
        <position position="333"/>
    </location>
</feature>
<feature type="cross-link" description="Glycyl lysine isopeptide (Lys-Gly) (interchain with G-Cter in SUMO2); alternate" evidence="3">
    <location>
        <position position="346"/>
    </location>
</feature>
<feature type="cross-link" description="Glycyl lysine isopeptide (Lys-Gly) (interchain with G-Cter in SUMO2)" evidence="3">
    <location>
        <position position="353"/>
    </location>
</feature>
<feature type="cross-link" description="Glycyl lysine isopeptide (Lys-Gly) (interchain with G-Cter in SUMO2)" evidence="3">
    <location>
        <position position="375"/>
    </location>
</feature>
<feature type="cross-link" description="Glycyl lysine isopeptide (Lys-Gly) (interchain with G-Cter in SUMO1); alternate" evidence="3">
    <location>
        <position position="384"/>
    </location>
</feature>
<feature type="cross-link" description="Glycyl lysine isopeptide (Lys-Gly) (interchain with G-Cter in SUMO2); alternate" evidence="3">
    <location>
        <position position="384"/>
    </location>
</feature>
<feature type="cross-link" description="Glycyl lysine isopeptide (Lys-Gly) (interchain with G-Cter in SUMO2)" evidence="3">
    <location>
        <position position="386"/>
    </location>
</feature>
<feature type="cross-link" description="Glycyl lysine isopeptide (Lys-Gly) (interchain with G-Cter in SUMO2)" evidence="3">
    <location>
        <position position="393"/>
    </location>
</feature>
<feature type="cross-link" description="Glycyl lysine isopeptide (Lys-Gly) (interchain with G-Cter in SUMO2)" evidence="3">
    <location>
        <position position="398"/>
    </location>
</feature>
<feature type="cross-link" description="Glycyl lysine isopeptide (Lys-Gly) (interchain with G-Cter in SUMO2)" evidence="3">
    <location>
        <position position="418"/>
    </location>
</feature>
<feature type="cross-link" description="Glycyl lysine isopeptide (Lys-Gly) (interchain with G-Cter in SUMO2)" evidence="3">
    <location>
        <position position="424"/>
    </location>
</feature>
<feature type="cross-link" description="Glycyl lysine isopeptide (Lys-Gly) (interchain with G-Cter in SUMO1); alternate" evidence="3">
    <location>
        <position position="448"/>
    </location>
</feature>
<feature type="cross-link" description="Glycyl lysine isopeptide (Lys-Gly) (interchain with G-Cter in SUMO2); alternate" evidence="3">
    <location>
        <position position="448"/>
    </location>
</feature>
<feature type="cross-link" description="Glycyl lysine isopeptide (Lys-Gly) (interchain with G-Cter in SUMO2); alternate" evidence="3">
    <location>
        <position position="452"/>
    </location>
</feature>
<feature type="cross-link" description="Glycyl lysine isopeptide (Lys-Gly) (interchain with G-Cter in SUMO2)" evidence="3">
    <location>
        <position position="459"/>
    </location>
</feature>
<feature type="cross-link" description="Glycyl lysine isopeptide (Lys-Gly) (interchain with G-Cter in SUMO2)" evidence="3">
    <location>
        <position position="465"/>
    </location>
</feature>
<feature type="cross-link" description="Glycyl lysine isopeptide (Lys-Gly) (interchain with G-Cter in SUMO2); alternate" evidence="3">
    <location>
        <position position="468"/>
    </location>
</feature>
<feature type="cross-link" description="Glycyl lysine isopeptide (Lys-Gly) (interchain with G-Cter in SUMO2); alternate" evidence="3">
    <location>
        <position position="476"/>
    </location>
</feature>
<feature type="cross-link" description="Glycyl lysine isopeptide (Lys-Gly) (interchain with G-Cter in SUMO2)" evidence="3">
    <location>
        <position position="481"/>
    </location>
</feature>
<feature type="cross-link" description="Glycyl lysine isopeptide (Lys-Gly) (interchain with G-Cter in SUMO2); alternate" evidence="3">
    <location>
        <position position="524"/>
    </location>
</feature>
<feature type="cross-link" description="Glycyl lysine isopeptide (Lys-Gly) (interchain with G-Cter in SUMO2)" evidence="3">
    <location>
        <position position="548"/>
    </location>
</feature>
<feature type="cross-link" description="Glycyl lysine isopeptide (Lys-Gly) (interchain with G-Cter in SUMO2); alternate" evidence="3">
    <location>
        <position position="555"/>
    </location>
</feature>
<feature type="cross-link" description="Glycyl lysine isopeptide (Lys-Gly) (interchain with G-Cter in SUMO2)" evidence="3">
    <location>
        <position position="599"/>
    </location>
</feature>
<feature type="cross-link" description="Glycyl lysine isopeptide (Lys-Gly) (interchain with G-Cter in SUMO2)" evidence="3">
    <location>
        <position position="694"/>
    </location>
</feature>
<feature type="cross-link" description="Glycyl lysine isopeptide (Lys-Gly) (interchain with G-Cter in SUMO2)" evidence="3">
    <location>
        <position position="702"/>
    </location>
</feature>
<feature type="cross-link" description="Glycyl lysine isopeptide (Lys-Gly) (interchain with G-Cter in SUMO2)" evidence="3">
    <location>
        <position position="706"/>
    </location>
</feature>
<feature type="cross-link" description="Glycyl lysine isopeptide (Lys-Gly) (interchain with G-Cter in SUMO2)" evidence="3">
    <location>
        <position position="708"/>
    </location>
</feature>
<feature type="cross-link" description="Glycyl lysine isopeptide (Lys-Gly) (interchain with G-Cter in SUMO2)" evidence="3">
    <location>
        <position position="753"/>
    </location>
</feature>
<feature type="cross-link" description="Glycyl lysine isopeptide (Lys-Gly) (interchain with G-Cter in SUMO2)" evidence="3">
    <location>
        <position position="756"/>
    </location>
</feature>
<feature type="cross-link" description="Glycyl lysine isopeptide (Lys-Gly) (interchain with G-Cter in SUMO2)" evidence="3">
    <location>
        <position position="872"/>
    </location>
</feature>
<feature type="cross-link" description="Glycyl lysine isopeptide (Lys-Gly) (interchain with G-Cter in SUMO2)" evidence="3">
    <location>
        <position position="875"/>
    </location>
</feature>
<name>TR150_MOUSE</name>